<gene>
    <name evidence="1" type="primary">mshA</name>
    <name type="ordered locus">MMAR_0812</name>
</gene>
<comment type="function">
    <text evidence="1">Catalyzes the transfer of a N-acetyl-glucosamine moiety to 1D-myo-inositol 3-phosphate to produce 1D-myo-inositol 2-acetamido-2-deoxy-glucopyranoside 3-phosphate in the mycothiol biosynthesis pathway.</text>
</comment>
<comment type="catalytic activity">
    <reaction evidence="1">
        <text>1D-myo-inositol 3-phosphate + UDP-N-acetyl-alpha-D-glucosamine = 1D-myo-inositol 2-acetamido-2-deoxy-alpha-D-glucopyranoside 3-phosphate + UDP + H(+)</text>
        <dbReference type="Rhea" id="RHEA:26188"/>
        <dbReference type="ChEBI" id="CHEBI:15378"/>
        <dbReference type="ChEBI" id="CHEBI:57705"/>
        <dbReference type="ChEBI" id="CHEBI:58223"/>
        <dbReference type="ChEBI" id="CHEBI:58401"/>
        <dbReference type="ChEBI" id="CHEBI:58892"/>
        <dbReference type="EC" id="2.4.1.250"/>
    </reaction>
</comment>
<comment type="subunit">
    <text evidence="1">Homodimer.</text>
</comment>
<comment type="similarity">
    <text evidence="1">Belongs to the glycosyltransferase group 1 family. MshA subfamily.</text>
</comment>
<organism>
    <name type="scientific">Mycobacterium marinum (strain ATCC BAA-535 / M)</name>
    <dbReference type="NCBI Taxonomy" id="216594"/>
    <lineage>
        <taxon>Bacteria</taxon>
        <taxon>Bacillati</taxon>
        <taxon>Actinomycetota</taxon>
        <taxon>Actinomycetes</taxon>
        <taxon>Mycobacteriales</taxon>
        <taxon>Mycobacteriaceae</taxon>
        <taxon>Mycobacterium</taxon>
        <taxon>Mycobacterium ulcerans group</taxon>
    </lineage>
</organism>
<reference key="1">
    <citation type="journal article" date="2008" name="Genome Res.">
        <title>Insights from the complete genome sequence of Mycobacterium marinum on the evolution of Mycobacterium tuberculosis.</title>
        <authorList>
            <person name="Stinear T.P."/>
            <person name="Seemann T."/>
            <person name="Harrison P.F."/>
            <person name="Jenkin G.A."/>
            <person name="Davies J.K."/>
            <person name="Johnson P.D."/>
            <person name="Abdellah Z."/>
            <person name="Arrowsmith C."/>
            <person name="Chillingworth T."/>
            <person name="Churcher C."/>
            <person name="Clarke K."/>
            <person name="Cronin A."/>
            <person name="Davis P."/>
            <person name="Goodhead I."/>
            <person name="Holroyd N."/>
            <person name="Jagels K."/>
            <person name="Lord A."/>
            <person name="Moule S."/>
            <person name="Mungall K."/>
            <person name="Norbertczak H."/>
            <person name="Quail M.A."/>
            <person name="Rabbinowitsch E."/>
            <person name="Walker D."/>
            <person name="White B."/>
            <person name="Whitehead S."/>
            <person name="Small P.L."/>
            <person name="Brosch R."/>
            <person name="Ramakrishnan L."/>
            <person name="Fischbach M.A."/>
            <person name="Parkhill J."/>
            <person name="Cole S.T."/>
        </authorList>
    </citation>
    <scope>NUCLEOTIDE SEQUENCE [LARGE SCALE GENOMIC DNA]</scope>
    <source>
        <strain>ATCC BAA-535 / M</strain>
    </source>
</reference>
<sequence>MRPMRAGAGAAGESCKDDGVRPDDVSRLTADAVVRRVALLAVHTSPLAQPGTGDAGGMNVYVLQSALHLAKRGIEVEIFTRATASADPPVVRVAPGVLVRNVVAGPFEGLDKYDLPTQLCAFAAGVLRAEAAHEPGHYDIVHSHYWLSGQVGWLARDRWAVPLVHTAHTLAAVKNAALANGDAPEPPLRTVGEQQVVDEADRLIVNTDDEAKQLISIHRADPARIDVVHPGVDLEVFRPGDRQQARTALGLRPEEKVVAFVGRIQPLKAPDIVLRAVAKLPGVRIIVAGGPSGSGLASPDGLAQLADELGIAERVTFLPPQSRTDLARVFHAVDLVAIPSYSESFGLVAVEAQACGTPVVAAAVGGLPVAVRDGVSGTLVSGHDVDQWAAAIDGLLRSNAGAQGALMSRAAAEHAATFSWENTTDALLASYRRAIGDFTAGRRRKVRDPVAARKPRRWTARRGVGA</sequence>
<protein>
    <recommendedName>
        <fullName>D-inositol 3-phosphate glycosyltransferase</fullName>
        <ecNumber evidence="1">2.4.1.250</ecNumber>
    </recommendedName>
    <alternativeName>
        <fullName evidence="1">N-acetylglucosamine-inositol-phosphate N-acetylglucosaminyltransferase</fullName>
        <shortName evidence="1">GlcNAc-Ins-P N-acetylglucosaminyltransferase</shortName>
    </alternativeName>
</protein>
<evidence type="ECO:0000255" key="1">
    <source>
        <dbReference type="HAMAP-Rule" id="MF_01695"/>
    </source>
</evidence>
<evidence type="ECO:0000256" key="2">
    <source>
        <dbReference type="SAM" id="MobiDB-lite"/>
    </source>
</evidence>
<dbReference type="EC" id="2.4.1.250" evidence="1"/>
<dbReference type="EMBL" id="CP000854">
    <property type="protein sequence ID" value="ACC39272.1"/>
    <property type="molecule type" value="Genomic_DNA"/>
</dbReference>
<dbReference type="SMR" id="B2HQV2"/>
<dbReference type="STRING" id="216594.MMAR_0812"/>
<dbReference type="CAZy" id="GT4">
    <property type="family name" value="Glycosyltransferase Family 4"/>
</dbReference>
<dbReference type="KEGG" id="mmi:MMAR_0812"/>
<dbReference type="eggNOG" id="COG0438">
    <property type="taxonomic scope" value="Bacteria"/>
</dbReference>
<dbReference type="HOGENOM" id="CLU_009583_2_3_11"/>
<dbReference type="Proteomes" id="UP000001190">
    <property type="component" value="Chromosome"/>
</dbReference>
<dbReference type="GO" id="GO:0008375">
    <property type="term" value="F:acetylglucosaminyltransferase activity"/>
    <property type="evidence" value="ECO:0007669"/>
    <property type="project" value="UniProtKB-UniRule"/>
</dbReference>
<dbReference type="GO" id="GO:0102710">
    <property type="term" value="F:D-inositol-3-phosphate glycosyltransferase activity"/>
    <property type="evidence" value="ECO:0007669"/>
    <property type="project" value="UniProtKB-EC"/>
</dbReference>
<dbReference type="GO" id="GO:0000287">
    <property type="term" value="F:magnesium ion binding"/>
    <property type="evidence" value="ECO:0007669"/>
    <property type="project" value="UniProtKB-UniRule"/>
</dbReference>
<dbReference type="GO" id="GO:0010125">
    <property type="term" value="P:mycothiol biosynthetic process"/>
    <property type="evidence" value="ECO:0007669"/>
    <property type="project" value="UniProtKB-UniRule"/>
</dbReference>
<dbReference type="CDD" id="cd03800">
    <property type="entry name" value="GT4_sucrose_synthase"/>
    <property type="match status" value="1"/>
</dbReference>
<dbReference type="FunFam" id="3.40.50.2000:FF:000123">
    <property type="entry name" value="D-inositol-3-phosphate glycosyltransferase"/>
    <property type="match status" value="1"/>
</dbReference>
<dbReference type="Gene3D" id="3.40.50.2000">
    <property type="entry name" value="Glycogen Phosphorylase B"/>
    <property type="match status" value="2"/>
</dbReference>
<dbReference type="HAMAP" id="MF_01695">
    <property type="entry name" value="MshA"/>
    <property type="match status" value="1"/>
</dbReference>
<dbReference type="InterPro" id="IPR001296">
    <property type="entry name" value="Glyco_trans_1"/>
</dbReference>
<dbReference type="InterPro" id="IPR028098">
    <property type="entry name" value="Glyco_trans_4-like_N"/>
</dbReference>
<dbReference type="InterPro" id="IPR017814">
    <property type="entry name" value="Mycothiol_biosynthesis_MshA"/>
</dbReference>
<dbReference type="NCBIfam" id="TIGR03449">
    <property type="entry name" value="mycothiol_MshA"/>
    <property type="match status" value="1"/>
</dbReference>
<dbReference type="PANTHER" id="PTHR12526:SF510">
    <property type="entry name" value="D-INOSITOL 3-PHOSPHATE GLYCOSYLTRANSFERASE"/>
    <property type="match status" value="1"/>
</dbReference>
<dbReference type="PANTHER" id="PTHR12526">
    <property type="entry name" value="GLYCOSYLTRANSFERASE"/>
    <property type="match status" value="1"/>
</dbReference>
<dbReference type="Pfam" id="PF13579">
    <property type="entry name" value="Glyco_trans_4_4"/>
    <property type="match status" value="1"/>
</dbReference>
<dbReference type="Pfam" id="PF00534">
    <property type="entry name" value="Glycos_transf_1"/>
    <property type="match status" value="1"/>
</dbReference>
<dbReference type="SUPFAM" id="SSF53756">
    <property type="entry name" value="UDP-Glycosyltransferase/glycogen phosphorylase"/>
    <property type="match status" value="1"/>
</dbReference>
<accession>B2HQV2</accession>
<keyword id="KW-0328">Glycosyltransferase</keyword>
<keyword id="KW-0460">Magnesium</keyword>
<keyword id="KW-0479">Metal-binding</keyword>
<keyword id="KW-1185">Reference proteome</keyword>
<keyword id="KW-0808">Transferase</keyword>
<name>MSHA_MYCMM</name>
<feature type="chain" id="PRO_0000400136" description="D-inositol 3-phosphate glycosyltransferase">
    <location>
        <begin position="1"/>
        <end position="466"/>
    </location>
</feature>
<feature type="region of interest" description="Disordered" evidence="2">
    <location>
        <begin position="1"/>
        <end position="22"/>
    </location>
</feature>
<feature type="region of interest" description="Disordered" evidence="2">
    <location>
        <begin position="446"/>
        <end position="466"/>
    </location>
</feature>
<feature type="compositionally biased region" description="Low complexity" evidence="2">
    <location>
        <begin position="1"/>
        <end position="12"/>
    </location>
</feature>
<feature type="binding site" evidence="1">
    <location>
        <position position="43"/>
    </location>
    <ligand>
        <name>1D-myo-inositol 3-phosphate</name>
        <dbReference type="ChEBI" id="CHEBI:58401"/>
    </ligand>
</feature>
<feature type="binding site" evidence="1">
    <location>
        <begin position="49"/>
        <end position="50"/>
    </location>
    <ligand>
        <name>UDP-N-acetyl-alpha-D-glucosamine</name>
        <dbReference type="ChEBI" id="CHEBI:57705"/>
    </ligand>
</feature>
<feature type="binding site" evidence="1">
    <location>
        <begin position="54"/>
        <end position="59"/>
    </location>
    <ligand>
        <name>1D-myo-inositol 3-phosphate</name>
        <dbReference type="ChEBI" id="CHEBI:58401"/>
    </ligand>
</feature>
<feature type="binding site" evidence="1">
    <location>
        <position position="57"/>
    </location>
    <ligand>
        <name>UDP-N-acetyl-alpha-D-glucosamine</name>
        <dbReference type="ChEBI" id="CHEBI:57705"/>
    </ligand>
</feature>
<feature type="binding site" evidence="1">
    <location>
        <position position="112"/>
    </location>
    <ligand>
        <name>1D-myo-inositol 3-phosphate</name>
        <dbReference type="ChEBI" id="CHEBI:58401"/>
    </ligand>
</feature>
<feature type="binding site" evidence="1">
    <location>
        <position position="145"/>
    </location>
    <ligand>
        <name>1D-myo-inositol 3-phosphate</name>
        <dbReference type="ChEBI" id="CHEBI:58401"/>
    </ligand>
</feature>
<feature type="binding site" evidence="1">
    <location>
        <position position="169"/>
    </location>
    <ligand>
        <name>1D-myo-inositol 3-phosphate</name>
        <dbReference type="ChEBI" id="CHEBI:58401"/>
    </ligand>
</feature>
<feature type="binding site" evidence="1">
    <location>
        <position position="189"/>
    </location>
    <ligand>
        <name>1D-myo-inositol 3-phosphate</name>
        <dbReference type="ChEBI" id="CHEBI:58401"/>
    </ligand>
</feature>
<feature type="binding site" evidence="1">
    <location>
        <position position="263"/>
    </location>
    <ligand>
        <name>UDP-N-acetyl-alpha-D-glucosamine</name>
        <dbReference type="ChEBI" id="CHEBI:57705"/>
    </ligand>
</feature>
<feature type="binding site" evidence="1">
    <location>
        <position position="268"/>
    </location>
    <ligand>
        <name>UDP-N-acetyl-alpha-D-glucosamine</name>
        <dbReference type="ChEBI" id="CHEBI:57705"/>
    </ligand>
</feature>
<feature type="binding site" evidence="1">
    <location>
        <position position="321"/>
    </location>
    <ligand>
        <name>UDP-N-acetyl-alpha-D-glucosamine</name>
        <dbReference type="ChEBI" id="CHEBI:57705"/>
    </ligand>
</feature>
<feature type="binding site" evidence="1">
    <location>
        <position position="330"/>
    </location>
    <ligand>
        <name>Mg(2+)</name>
        <dbReference type="ChEBI" id="CHEBI:18420"/>
    </ligand>
</feature>
<feature type="binding site" evidence="1">
    <location>
        <position position="331"/>
    </location>
    <ligand>
        <name>Mg(2+)</name>
        <dbReference type="ChEBI" id="CHEBI:18420"/>
    </ligand>
</feature>
<feature type="binding site" evidence="1">
    <location>
        <position position="333"/>
    </location>
    <ligand>
        <name>Mg(2+)</name>
        <dbReference type="ChEBI" id="CHEBI:18420"/>
    </ligand>
</feature>
<feature type="binding site" evidence="1">
    <location>
        <position position="343"/>
    </location>
    <ligand>
        <name>UDP-N-acetyl-alpha-D-glucosamine</name>
        <dbReference type="ChEBI" id="CHEBI:57705"/>
    </ligand>
</feature>
<feature type="binding site" evidence="1">
    <location>
        <position position="351"/>
    </location>
    <ligand>
        <name>UDP-N-acetyl-alpha-D-glucosamine</name>
        <dbReference type="ChEBI" id="CHEBI:57705"/>
    </ligand>
</feature>
<feature type="binding site" evidence="1">
    <location>
        <position position="357"/>
    </location>
    <ligand>
        <name>Mg(2+)</name>
        <dbReference type="ChEBI" id="CHEBI:18420"/>
    </ligand>
</feature>
<proteinExistence type="inferred from homology"/>